<gene>
    <name evidence="1" type="primary">atpD</name>
    <name type="ordered locus">LIC_11243</name>
</gene>
<proteinExistence type="inferred from homology"/>
<feature type="chain" id="PRO_0000254290" description="ATP synthase subunit beta">
    <location>
        <begin position="1"/>
        <end position="467"/>
    </location>
</feature>
<feature type="binding site" evidence="1">
    <location>
        <begin position="154"/>
        <end position="161"/>
    </location>
    <ligand>
        <name>ATP</name>
        <dbReference type="ChEBI" id="CHEBI:30616"/>
    </ligand>
</feature>
<evidence type="ECO:0000255" key="1">
    <source>
        <dbReference type="HAMAP-Rule" id="MF_01347"/>
    </source>
</evidence>
<dbReference type="EC" id="7.1.2.2" evidence="1"/>
<dbReference type="EMBL" id="AE016823">
    <property type="protein sequence ID" value="AAS69849.1"/>
    <property type="molecule type" value="Genomic_DNA"/>
</dbReference>
<dbReference type="RefSeq" id="WP_001032431.1">
    <property type="nucleotide sequence ID" value="NC_005823.1"/>
</dbReference>
<dbReference type="SMR" id="Q72SX9"/>
<dbReference type="GeneID" id="61144560"/>
<dbReference type="KEGG" id="lic:LIC_11243"/>
<dbReference type="HOGENOM" id="CLU_022398_0_2_12"/>
<dbReference type="Proteomes" id="UP000007037">
    <property type="component" value="Chromosome I"/>
</dbReference>
<dbReference type="GO" id="GO:0005886">
    <property type="term" value="C:plasma membrane"/>
    <property type="evidence" value="ECO:0007669"/>
    <property type="project" value="UniProtKB-SubCell"/>
</dbReference>
<dbReference type="GO" id="GO:0045259">
    <property type="term" value="C:proton-transporting ATP synthase complex"/>
    <property type="evidence" value="ECO:0007669"/>
    <property type="project" value="UniProtKB-KW"/>
</dbReference>
<dbReference type="GO" id="GO:0005524">
    <property type="term" value="F:ATP binding"/>
    <property type="evidence" value="ECO:0007669"/>
    <property type="project" value="UniProtKB-UniRule"/>
</dbReference>
<dbReference type="GO" id="GO:0016887">
    <property type="term" value="F:ATP hydrolysis activity"/>
    <property type="evidence" value="ECO:0007669"/>
    <property type="project" value="InterPro"/>
</dbReference>
<dbReference type="GO" id="GO:0046933">
    <property type="term" value="F:proton-transporting ATP synthase activity, rotational mechanism"/>
    <property type="evidence" value="ECO:0007669"/>
    <property type="project" value="UniProtKB-UniRule"/>
</dbReference>
<dbReference type="CDD" id="cd18110">
    <property type="entry name" value="ATP-synt_F1_beta_C"/>
    <property type="match status" value="1"/>
</dbReference>
<dbReference type="CDD" id="cd18115">
    <property type="entry name" value="ATP-synt_F1_beta_N"/>
    <property type="match status" value="1"/>
</dbReference>
<dbReference type="CDD" id="cd01133">
    <property type="entry name" value="F1-ATPase_beta_CD"/>
    <property type="match status" value="1"/>
</dbReference>
<dbReference type="FunFam" id="1.10.1140.10:FF:000001">
    <property type="entry name" value="ATP synthase subunit beta"/>
    <property type="match status" value="1"/>
</dbReference>
<dbReference type="FunFam" id="2.40.10.170:FF:000010">
    <property type="entry name" value="ATP synthase subunit beta"/>
    <property type="match status" value="1"/>
</dbReference>
<dbReference type="FunFam" id="3.40.50.300:FF:000004">
    <property type="entry name" value="ATP synthase subunit beta"/>
    <property type="match status" value="1"/>
</dbReference>
<dbReference type="Gene3D" id="2.40.10.170">
    <property type="match status" value="1"/>
</dbReference>
<dbReference type="Gene3D" id="1.10.1140.10">
    <property type="entry name" value="Bovine Mitochondrial F1-atpase, Atp Synthase Beta Chain, Chain D, domain 3"/>
    <property type="match status" value="1"/>
</dbReference>
<dbReference type="Gene3D" id="3.40.50.300">
    <property type="entry name" value="P-loop containing nucleotide triphosphate hydrolases"/>
    <property type="match status" value="1"/>
</dbReference>
<dbReference type="HAMAP" id="MF_01347">
    <property type="entry name" value="ATP_synth_beta_bact"/>
    <property type="match status" value="1"/>
</dbReference>
<dbReference type="InterPro" id="IPR003593">
    <property type="entry name" value="AAA+_ATPase"/>
</dbReference>
<dbReference type="InterPro" id="IPR055190">
    <property type="entry name" value="ATP-synt_VA_C"/>
</dbReference>
<dbReference type="InterPro" id="IPR005722">
    <property type="entry name" value="ATP_synth_F1_bsu"/>
</dbReference>
<dbReference type="InterPro" id="IPR020003">
    <property type="entry name" value="ATPase_a/bsu_AS"/>
</dbReference>
<dbReference type="InterPro" id="IPR050053">
    <property type="entry name" value="ATPase_alpha/beta_chains"/>
</dbReference>
<dbReference type="InterPro" id="IPR004100">
    <property type="entry name" value="ATPase_F1/V1/A1_a/bsu_N"/>
</dbReference>
<dbReference type="InterPro" id="IPR036121">
    <property type="entry name" value="ATPase_F1/V1/A1_a/bsu_N_sf"/>
</dbReference>
<dbReference type="InterPro" id="IPR000194">
    <property type="entry name" value="ATPase_F1/V1/A1_a/bsu_nucl-bd"/>
</dbReference>
<dbReference type="InterPro" id="IPR024034">
    <property type="entry name" value="ATPase_F1/V1_b/a_C"/>
</dbReference>
<dbReference type="InterPro" id="IPR027417">
    <property type="entry name" value="P-loop_NTPase"/>
</dbReference>
<dbReference type="NCBIfam" id="TIGR01039">
    <property type="entry name" value="atpD"/>
    <property type="match status" value="1"/>
</dbReference>
<dbReference type="PANTHER" id="PTHR15184">
    <property type="entry name" value="ATP SYNTHASE"/>
    <property type="match status" value="1"/>
</dbReference>
<dbReference type="PANTHER" id="PTHR15184:SF71">
    <property type="entry name" value="ATP SYNTHASE SUBUNIT BETA, MITOCHONDRIAL"/>
    <property type="match status" value="1"/>
</dbReference>
<dbReference type="Pfam" id="PF00006">
    <property type="entry name" value="ATP-synt_ab"/>
    <property type="match status" value="1"/>
</dbReference>
<dbReference type="Pfam" id="PF02874">
    <property type="entry name" value="ATP-synt_ab_N"/>
    <property type="match status" value="1"/>
</dbReference>
<dbReference type="Pfam" id="PF22919">
    <property type="entry name" value="ATP-synt_VA_C"/>
    <property type="match status" value="1"/>
</dbReference>
<dbReference type="SMART" id="SM00382">
    <property type="entry name" value="AAA"/>
    <property type="match status" value="1"/>
</dbReference>
<dbReference type="SUPFAM" id="SSF47917">
    <property type="entry name" value="C-terminal domain of alpha and beta subunits of F1 ATP synthase"/>
    <property type="match status" value="1"/>
</dbReference>
<dbReference type="SUPFAM" id="SSF50615">
    <property type="entry name" value="N-terminal domain of alpha and beta subunits of F1 ATP synthase"/>
    <property type="match status" value="1"/>
</dbReference>
<dbReference type="SUPFAM" id="SSF52540">
    <property type="entry name" value="P-loop containing nucleoside triphosphate hydrolases"/>
    <property type="match status" value="1"/>
</dbReference>
<dbReference type="PROSITE" id="PS00152">
    <property type="entry name" value="ATPASE_ALPHA_BETA"/>
    <property type="match status" value="1"/>
</dbReference>
<sequence>MNKGKIKQIIGSVLDIEFENGELPEIYNALEIETNVSGKKETIIAEVQTHIGGKAVRAIALSSTDGLIRGQEVSNTGKPISVPVGDATLGRIFNVLGKTIDEGPAITVKETRPIHRAAPSFDELTSKTEVFETGIKVIDLLAPYIKGGKTGLFGGAGVGKTVLIQELINNIAKQHGGFSVFAGVGERTREGNDLWREMKESGVIDKTVLCYGQMNEPPGARLRVALSALTMAEHFRDSIGTDVLLFVDNIFRFSQAGSEVSALLGRMPSAVGYQPTLSTEMGALQERITSTKKGSITSVQAIYVPADDLTDPAPANAFAHLDATTVLSRAISDKGIYPAVDPLDSTSRVMNAQVLGEEHYLVAREVQRILQRYKDLQDIIAILGMDELSEDDKVLVARARKIEKFLSQPFHVAEVFTGAPGKYVKLADTVRSFKEVISGNYDHLPEQAFYMVGSIDDAIEKAKGYKG</sequence>
<reference key="1">
    <citation type="journal article" date="2004" name="J. Bacteriol.">
        <title>Comparative genomics of two Leptospira interrogans serovars reveals novel insights into physiology and pathogenesis.</title>
        <authorList>
            <person name="Nascimento A.L.T.O."/>
            <person name="Ko A.I."/>
            <person name="Martins E.A.L."/>
            <person name="Monteiro-Vitorello C.B."/>
            <person name="Ho P.L."/>
            <person name="Haake D.A."/>
            <person name="Verjovski-Almeida S."/>
            <person name="Hartskeerl R.A."/>
            <person name="Marques M.V."/>
            <person name="Oliveira M.C."/>
            <person name="Menck C.F.M."/>
            <person name="Leite L.C.C."/>
            <person name="Carrer H."/>
            <person name="Coutinho L.L."/>
            <person name="Degrave W.M."/>
            <person name="Dellagostin O.A."/>
            <person name="El-Dorry H."/>
            <person name="Ferro E.S."/>
            <person name="Ferro M.I.T."/>
            <person name="Furlan L.R."/>
            <person name="Gamberini M."/>
            <person name="Giglioti E.A."/>
            <person name="Goes-Neto A."/>
            <person name="Goldman G.H."/>
            <person name="Goldman M.H.S."/>
            <person name="Harakava R."/>
            <person name="Jeronimo S.M.B."/>
            <person name="Junqueira-de-Azevedo I.L.M."/>
            <person name="Kimura E.T."/>
            <person name="Kuramae E.E."/>
            <person name="Lemos E.G.M."/>
            <person name="Lemos M.V.F."/>
            <person name="Marino C.L."/>
            <person name="Nunes L.R."/>
            <person name="de Oliveira R.C."/>
            <person name="Pereira G.G."/>
            <person name="Reis M.S."/>
            <person name="Schriefer A."/>
            <person name="Siqueira W.J."/>
            <person name="Sommer P."/>
            <person name="Tsai S.M."/>
            <person name="Simpson A.J.G."/>
            <person name="Ferro J.A."/>
            <person name="Camargo L.E.A."/>
            <person name="Kitajima J.P."/>
            <person name="Setubal J.C."/>
            <person name="Van Sluys M.A."/>
        </authorList>
    </citation>
    <scope>NUCLEOTIDE SEQUENCE [LARGE SCALE GENOMIC DNA]</scope>
    <source>
        <strain>Fiocruz L1-130</strain>
    </source>
</reference>
<accession>Q72SX9</accession>
<organism>
    <name type="scientific">Leptospira interrogans serogroup Icterohaemorrhagiae serovar copenhageni (strain Fiocruz L1-130)</name>
    <dbReference type="NCBI Taxonomy" id="267671"/>
    <lineage>
        <taxon>Bacteria</taxon>
        <taxon>Pseudomonadati</taxon>
        <taxon>Spirochaetota</taxon>
        <taxon>Spirochaetia</taxon>
        <taxon>Leptospirales</taxon>
        <taxon>Leptospiraceae</taxon>
        <taxon>Leptospira</taxon>
    </lineage>
</organism>
<protein>
    <recommendedName>
        <fullName evidence="1">ATP synthase subunit beta</fullName>
        <ecNumber evidence="1">7.1.2.2</ecNumber>
    </recommendedName>
    <alternativeName>
        <fullName evidence="1">ATP synthase F1 sector subunit beta</fullName>
    </alternativeName>
    <alternativeName>
        <fullName evidence="1">F-ATPase subunit beta</fullName>
    </alternativeName>
</protein>
<name>ATPB_LEPIC</name>
<comment type="function">
    <text evidence="1">Produces ATP from ADP in the presence of a proton gradient across the membrane. The catalytic sites are hosted primarily by the beta subunits.</text>
</comment>
<comment type="catalytic activity">
    <reaction evidence="1">
        <text>ATP + H2O + 4 H(+)(in) = ADP + phosphate + 5 H(+)(out)</text>
        <dbReference type="Rhea" id="RHEA:57720"/>
        <dbReference type="ChEBI" id="CHEBI:15377"/>
        <dbReference type="ChEBI" id="CHEBI:15378"/>
        <dbReference type="ChEBI" id="CHEBI:30616"/>
        <dbReference type="ChEBI" id="CHEBI:43474"/>
        <dbReference type="ChEBI" id="CHEBI:456216"/>
        <dbReference type="EC" id="7.1.2.2"/>
    </reaction>
</comment>
<comment type="subunit">
    <text evidence="1">F-type ATPases have 2 components, CF(1) - the catalytic core - and CF(0) - the membrane proton channel. CF(1) has five subunits: alpha(3), beta(3), gamma(1), delta(1), epsilon(1). CF(0) has three main subunits: a(1), b(2) and c(9-12). The alpha and beta chains form an alternating ring which encloses part of the gamma chain. CF(1) is attached to CF(0) by a central stalk formed by the gamma and epsilon chains, while a peripheral stalk is formed by the delta and b chains.</text>
</comment>
<comment type="subcellular location">
    <subcellularLocation>
        <location evidence="1">Cell inner membrane</location>
        <topology evidence="1">Peripheral membrane protein</topology>
    </subcellularLocation>
</comment>
<comment type="similarity">
    <text evidence="1">Belongs to the ATPase alpha/beta chains family.</text>
</comment>
<keyword id="KW-0066">ATP synthesis</keyword>
<keyword id="KW-0067">ATP-binding</keyword>
<keyword id="KW-0997">Cell inner membrane</keyword>
<keyword id="KW-1003">Cell membrane</keyword>
<keyword id="KW-0139">CF(1)</keyword>
<keyword id="KW-0375">Hydrogen ion transport</keyword>
<keyword id="KW-0406">Ion transport</keyword>
<keyword id="KW-0472">Membrane</keyword>
<keyword id="KW-0547">Nucleotide-binding</keyword>
<keyword id="KW-1278">Translocase</keyword>
<keyword id="KW-0813">Transport</keyword>